<comment type="function">
    <text evidence="1">Specifically methylates position 2 of adenine 2503 in 23S rRNA and position 2 of adenine 37 in tRNAs. m2A2503 modification seems to play a crucial role in the proofreading step occurring at the peptidyl transferase center and thus would serve to optimize ribosomal fidelity.</text>
</comment>
<comment type="catalytic activity">
    <reaction evidence="1">
        <text>adenosine(2503) in 23S rRNA + 2 reduced [2Fe-2S]-[ferredoxin] + 2 S-adenosyl-L-methionine = 2-methyladenosine(2503) in 23S rRNA + 5'-deoxyadenosine + L-methionine + 2 oxidized [2Fe-2S]-[ferredoxin] + S-adenosyl-L-homocysteine</text>
        <dbReference type="Rhea" id="RHEA:42916"/>
        <dbReference type="Rhea" id="RHEA-COMP:10000"/>
        <dbReference type="Rhea" id="RHEA-COMP:10001"/>
        <dbReference type="Rhea" id="RHEA-COMP:10152"/>
        <dbReference type="Rhea" id="RHEA-COMP:10282"/>
        <dbReference type="ChEBI" id="CHEBI:17319"/>
        <dbReference type="ChEBI" id="CHEBI:33737"/>
        <dbReference type="ChEBI" id="CHEBI:33738"/>
        <dbReference type="ChEBI" id="CHEBI:57844"/>
        <dbReference type="ChEBI" id="CHEBI:57856"/>
        <dbReference type="ChEBI" id="CHEBI:59789"/>
        <dbReference type="ChEBI" id="CHEBI:74411"/>
        <dbReference type="ChEBI" id="CHEBI:74497"/>
        <dbReference type="EC" id="2.1.1.192"/>
    </reaction>
</comment>
<comment type="catalytic activity">
    <reaction evidence="1">
        <text>adenosine(37) in tRNA + 2 reduced [2Fe-2S]-[ferredoxin] + 2 S-adenosyl-L-methionine = 2-methyladenosine(37) in tRNA + 5'-deoxyadenosine + L-methionine + 2 oxidized [2Fe-2S]-[ferredoxin] + S-adenosyl-L-homocysteine</text>
        <dbReference type="Rhea" id="RHEA:43332"/>
        <dbReference type="Rhea" id="RHEA-COMP:10000"/>
        <dbReference type="Rhea" id="RHEA-COMP:10001"/>
        <dbReference type="Rhea" id="RHEA-COMP:10162"/>
        <dbReference type="Rhea" id="RHEA-COMP:10485"/>
        <dbReference type="ChEBI" id="CHEBI:17319"/>
        <dbReference type="ChEBI" id="CHEBI:33737"/>
        <dbReference type="ChEBI" id="CHEBI:33738"/>
        <dbReference type="ChEBI" id="CHEBI:57844"/>
        <dbReference type="ChEBI" id="CHEBI:57856"/>
        <dbReference type="ChEBI" id="CHEBI:59789"/>
        <dbReference type="ChEBI" id="CHEBI:74411"/>
        <dbReference type="ChEBI" id="CHEBI:74497"/>
        <dbReference type="EC" id="2.1.1.192"/>
    </reaction>
</comment>
<comment type="cofactor">
    <cofactor evidence="1">
        <name>[4Fe-4S] cluster</name>
        <dbReference type="ChEBI" id="CHEBI:49883"/>
    </cofactor>
    <text evidence="1">Binds 1 [4Fe-4S] cluster. The cluster is coordinated with 3 cysteines and an exchangeable S-adenosyl-L-methionine.</text>
</comment>
<comment type="subcellular location">
    <subcellularLocation>
        <location evidence="1">Cytoplasm</location>
    </subcellularLocation>
</comment>
<comment type="miscellaneous">
    <text evidence="1">Reaction proceeds by a ping-pong mechanism involving intermediate methylation of a conserved cysteine residue.</text>
</comment>
<comment type="similarity">
    <text evidence="1">Belongs to the radical SAM superfamily. RlmN family.</text>
</comment>
<reference key="1">
    <citation type="submission" date="2007-10" db="EMBL/GenBank/DDBJ databases">
        <title>Genome sequence of Campylobacter concisus 13826 isolated from human feces.</title>
        <authorList>
            <person name="Fouts D.E."/>
            <person name="Mongodin E.F."/>
            <person name="Puiu D."/>
            <person name="Sebastian Y."/>
            <person name="Miller W.G."/>
            <person name="Mandrell R.E."/>
            <person name="On S."/>
            <person name="Nelson K.E."/>
        </authorList>
    </citation>
    <scope>NUCLEOTIDE SEQUENCE [LARGE SCALE GENOMIC DNA]</scope>
    <source>
        <strain>13826</strain>
    </source>
</reference>
<dbReference type="EC" id="2.1.1.192" evidence="1"/>
<dbReference type="EMBL" id="CP000792">
    <property type="protein sequence ID" value="EAT99089.1"/>
    <property type="molecule type" value="Genomic_DNA"/>
</dbReference>
<dbReference type="RefSeq" id="WP_012140654.1">
    <property type="nucleotide sequence ID" value="NC_009802.2"/>
</dbReference>
<dbReference type="SMR" id="A7ZGB0"/>
<dbReference type="STRING" id="360104.CCC13826_1892"/>
<dbReference type="KEGG" id="cco:CCC13826_1892"/>
<dbReference type="eggNOG" id="COG0820">
    <property type="taxonomic scope" value="Bacteria"/>
</dbReference>
<dbReference type="HOGENOM" id="CLU_029101_2_0_7"/>
<dbReference type="OrthoDB" id="9793973at2"/>
<dbReference type="Proteomes" id="UP000001121">
    <property type="component" value="Chromosome"/>
</dbReference>
<dbReference type="GO" id="GO:0005737">
    <property type="term" value="C:cytoplasm"/>
    <property type="evidence" value="ECO:0007669"/>
    <property type="project" value="UniProtKB-SubCell"/>
</dbReference>
<dbReference type="GO" id="GO:0051539">
    <property type="term" value="F:4 iron, 4 sulfur cluster binding"/>
    <property type="evidence" value="ECO:0007669"/>
    <property type="project" value="UniProtKB-UniRule"/>
</dbReference>
<dbReference type="GO" id="GO:0046872">
    <property type="term" value="F:metal ion binding"/>
    <property type="evidence" value="ECO:0007669"/>
    <property type="project" value="UniProtKB-KW"/>
</dbReference>
<dbReference type="GO" id="GO:0070040">
    <property type="term" value="F:rRNA (adenine(2503)-C2-)-methyltransferase activity"/>
    <property type="evidence" value="ECO:0007669"/>
    <property type="project" value="UniProtKB-UniRule"/>
</dbReference>
<dbReference type="GO" id="GO:0019843">
    <property type="term" value="F:rRNA binding"/>
    <property type="evidence" value="ECO:0007669"/>
    <property type="project" value="UniProtKB-UniRule"/>
</dbReference>
<dbReference type="GO" id="GO:0002935">
    <property type="term" value="F:tRNA (adenine(37)-C2)-methyltransferase activity"/>
    <property type="evidence" value="ECO:0007669"/>
    <property type="project" value="UniProtKB-UniRule"/>
</dbReference>
<dbReference type="GO" id="GO:0000049">
    <property type="term" value="F:tRNA binding"/>
    <property type="evidence" value="ECO:0007669"/>
    <property type="project" value="UniProtKB-UniRule"/>
</dbReference>
<dbReference type="GO" id="GO:0070475">
    <property type="term" value="P:rRNA base methylation"/>
    <property type="evidence" value="ECO:0007669"/>
    <property type="project" value="UniProtKB-UniRule"/>
</dbReference>
<dbReference type="GO" id="GO:0030488">
    <property type="term" value="P:tRNA methylation"/>
    <property type="evidence" value="ECO:0007669"/>
    <property type="project" value="UniProtKB-UniRule"/>
</dbReference>
<dbReference type="CDD" id="cd01335">
    <property type="entry name" value="Radical_SAM"/>
    <property type="match status" value="1"/>
</dbReference>
<dbReference type="FunFam" id="3.20.20.70:FF:000014">
    <property type="entry name" value="Probable dual-specificity RNA methyltransferase RlmN"/>
    <property type="match status" value="1"/>
</dbReference>
<dbReference type="Gene3D" id="1.10.150.530">
    <property type="match status" value="1"/>
</dbReference>
<dbReference type="Gene3D" id="3.20.20.70">
    <property type="entry name" value="Aldolase class I"/>
    <property type="match status" value="1"/>
</dbReference>
<dbReference type="HAMAP" id="MF_01849">
    <property type="entry name" value="RNA_methyltr_RlmN"/>
    <property type="match status" value="1"/>
</dbReference>
<dbReference type="InterPro" id="IPR013785">
    <property type="entry name" value="Aldolase_TIM"/>
</dbReference>
<dbReference type="InterPro" id="IPR040072">
    <property type="entry name" value="Methyltransferase_A"/>
</dbReference>
<dbReference type="InterPro" id="IPR048641">
    <property type="entry name" value="RlmN_N"/>
</dbReference>
<dbReference type="InterPro" id="IPR027492">
    <property type="entry name" value="RNA_MTrfase_RlmN"/>
</dbReference>
<dbReference type="InterPro" id="IPR004383">
    <property type="entry name" value="rRNA_lsu_MTrfase_RlmN/Cfr"/>
</dbReference>
<dbReference type="InterPro" id="IPR007197">
    <property type="entry name" value="rSAM"/>
</dbReference>
<dbReference type="NCBIfam" id="TIGR00048">
    <property type="entry name" value="rRNA_mod_RlmN"/>
    <property type="match status" value="1"/>
</dbReference>
<dbReference type="PANTHER" id="PTHR30544">
    <property type="entry name" value="23S RRNA METHYLTRANSFERASE"/>
    <property type="match status" value="1"/>
</dbReference>
<dbReference type="PANTHER" id="PTHR30544:SF5">
    <property type="entry name" value="RADICAL SAM CORE DOMAIN-CONTAINING PROTEIN"/>
    <property type="match status" value="1"/>
</dbReference>
<dbReference type="Pfam" id="PF04055">
    <property type="entry name" value="Radical_SAM"/>
    <property type="match status" value="1"/>
</dbReference>
<dbReference type="Pfam" id="PF21016">
    <property type="entry name" value="RlmN_N"/>
    <property type="match status" value="1"/>
</dbReference>
<dbReference type="PIRSF" id="PIRSF006004">
    <property type="entry name" value="CHP00048"/>
    <property type="match status" value="1"/>
</dbReference>
<dbReference type="SFLD" id="SFLDF00275">
    <property type="entry name" value="adenosine_C2_methyltransferase"/>
    <property type="match status" value="1"/>
</dbReference>
<dbReference type="SFLD" id="SFLDG01062">
    <property type="entry name" value="methyltransferase_(Class_A)"/>
    <property type="match status" value="1"/>
</dbReference>
<dbReference type="SUPFAM" id="SSF102114">
    <property type="entry name" value="Radical SAM enzymes"/>
    <property type="match status" value="1"/>
</dbReference>
<dbReference type="PROSITE" id="PS51918">
    <property type="entry name" value="RADICAL_SAM"/>
    <property type="match status" value="1"/>
</dbReference>
<accession>A7ZGB0</accession>
<keyword id="KW-0004">4Fe-4S</keyword>
<keyword id="KW-0963">Cytoplasm</keyword>
<keyword id="KW-1015">Disulfide bond</keyword>
<keyword id="KW-0408">Iron</keyword>
<keyword id="KW-0411">Iron-sulfur</keyword>
<keyword id="KW-0479">Metal-binding</keyword>
<keyword id="KW-0489">Methyltransferase</keyword>
<keyword id="KW-0698">rRNA processing</keyword>
<keyword id="KW-0949">S-adenosyl-L-methionine</keyword>
<keyword id="KW-0808">Transferase</keyword>
<keyword id="KW-0819">tRNA processing</keyword>
<sequence length="381" mass="42874">MKNLLDLSIEELKELVSPSFRATQIYEWVYKKNATEFSQMLNLPKDMRQDLAEKFYLDPLKCVKFEQSSDGSIKYLFELKDGLKIESVLLPMKEEISDEDGKISRHARYTICVSSQVGCKMGCAFCLTAKGGLVRNLTAGEIVGQILWIKRENKIPYERRINVVYMGMGEPLDNLTNVSKAIKILALNEGLAISPRRQTVSTSGLGSQIKKLGEMDLGVLLAISLHAVTNELRSRLMPINKAYNIEAVMDAVRGFPIDMRKRVMFEYLVIKDLNDSVSDAKKLVKLLHGIKAKVNLIYFNPHEGSEFGRPELASMLKFQEYLRDHGVTCTIRQSKGLDISAACGQLKQRNENPKFRANVSGNSAAKTEEKPTNDKTNVSKK</sequence>
<name>RLMN_CAMC1</name>
<feature type="chain" id="PRO_0000350090" description="Dual-specificity RNA methyltransferase RlmN">
    <location>
        <begin position="1"/>
        <end position="381"/>
    </location>
</feature>
<feature type="domain" description="Radical SAM core" evidence="2">
    <location>
        <begin position="105"/>
        <end position="338"/>
    </location>
</feature>
<feature type="region of interest" description="Disordered" evidence="3">
    <location>
        <begin position="351"/>
        <end position="381"/>
    </location>
</feature>
<feature type="active site" description="Proton acceptor" evidence="1">
    <location>
        <position position="86"/>
    </location>
</feature>
<feature type="active site" description="S-methylcysteine intermediate" evidence="1">
    <location>
        <position position="343"/>
    </location>
</feature>
<feature type="binding site" evidence="1">
    <location>
        <position position="119"/>
    </location>
    <ligand>
        <name>[4Fe-4S] cluster</name>
        <dbReference type="ChEBI" id="CHEBI:49883"/>
        <note>4Fe-4S-S-AdoMet</note>
    </ligand>
</feature>
<feature type="binding site" evidence="1">
    <location>
        <position position="123"/>
    </location>
    <ligand>
        <name>[4Fe-4S] cluster</name>
        <dbReference type="ChEBI" id="CHEBI:49883"/>
        <note>4Fe-4S-S-AdoMet</note>
    </ligand>
</feature>
<feature type="binding site" evidence="1">
    <location>
        <position position="126"/>
    </location>
    <ligand>
        <name>[4Fe-4S] cluster</name>
        <dbReference type="ChEBI" id="CHEBI:49883"/>
        <note>4Fe-4S-S-AdoMet</note>
    </ligand>
</feature>
<feature type="binding site" evidence="1">
    <location>
        <begin position="169"/>
        <end position="170"/>
    </location>
    <ligand>
        <name>S-adenosyl-L-methionine</name>
        <dbReference type="ChEBI" id="CHEBI:59789"/>
    </ligand>
</feature>
<feature type="binding site" evidence="1">
    <location>
        <position position="201"/>
    </location>
    <ligand>
        <name>S-adenosyl-L-methionine</name>
        <dbReference type="ChEBI" id="CHEBI:59789"/>
    </ligand>
</feature>
<feature type="binding site" evidence="1">
    <location>
        <begin position="224"/>
        <end position="226"/>
    </location>
    <ligand>
        <name>S-adenosyl-L-methionine</name>
        <dbReference type="ChEBI" id="CHEBI:59789"/>
    </ligand>
</feature>
<feature type="binding site" evidence="1">
    <location>
        <position position="300"/>
    </location>
    <ligand>
        <name>S-adenosyl-L-methionine</name>
        <dbReference type="ChEBI" id="CHEBI:59789"/>
    </ligand>
</feature>
<feature type="disulfide bond" description="(transient)" evidence="1">
    <location>
        <begin position="112"/>
        <end position="343"/>
    </location>
</feature>
<proteinExistence type="inferred from homology"/>
<organism>
    <name type="scientific">Campylobacter concisus (strain 13826)</name>
    <dbReference type="NCBI Taxonomy" id="360104"/>
    <lineage>
        <taxon>Bacteria</taxon>
        <taxon>Pseudomonadati</taxon>
        <taxon>Campylobacterota</taxon>
        <taxon>Epsilonproteobacteria</taxon>
        <taxon>Campylobacterales</taxon>
        <taxon>Campylobacteraceae</taxon>
        <taxon>Campylobacter</taxon>
    </lineage>
</organism>
<evidence type="ECO:0000255" key="1">
    <source>
        <dbReference type="HAMAP-Rule" id="MF_01849"/>
    </source>
</evidence>
<evidence type="ECO:0000255" key="2">
    <source>
        <dbReference type="PROSITE-ProRule" id="PRU01266"/>
    </source>
</evidence>
<evidence type="ECO:0000256" key="3">
    <source>
        <dbReference type="SAM" id="MobiDB-lite"/>
    </source>
</evidence>
<protein>
    <recommendedName>
        <fullName evidence="1">Dual-specificity RNA methyltransferase RlmN</fullName>
        <ecNumber evidence="1">2.1.1.192</ecNumber>
    </recommendedName>
    <alternativeName>
        <fullName evidence="1">23S rRNA (adenine(2503)-C(2))-methyltransferase</fullName>
    </alternativeName>
    <alternativeName>
        <fullName evidence="1">23S rRNA m2A2503 methyltransferase</fullName>
    </alternativeName>
    <alternativeName>
        <fullName evidence="1">Ribosomal RNA large subunit methyltransferase N</fullName>
    </alternativeName>
    <alternativeName>
        <fullName evidence="1">tRNA (adenine(37)-C(2))-methyltransferase</fullName>
    </alternativeName>
    <alternativeName>
        <fullName evidence="1">tRNA m2A37 methyltransferase</fullName>
    </alternativeName>
</protein>
<gene>
    <name evidence="1" type="primary">rlmN</name>
    <name type="ordered locus">Ccon26_19870</name>
    <name type="ORF">CCC13826_1892</name>
</gene>